<protein>
    <recommendedName>
        <fullName>Ubiquitin carboxyl-terminal hydrolase 28</fullName>
        <ecNumber>3.4.19.12</ecNumber>
    </recommendedName>
    <alternativeName>
        <fullName>Deubiquitinating enzyme 28</fullName>
    </alternativeName>
    <alternativeName>
        <fullName>Ubiquitin thioesterase 28</fullName>
    </alternativeName>
    <alternativeName>
        <fullName>Ubiquitin-specific-processing protease 28</fullName>
    </alternativeName>
</protein>
<gene>
    <name type="primary">Usp28</name>
</gene>
<feature type="chain" id="PRO_0000395809" description="Ubiquitin carboxyl-terminal hydrolase 28">
    <location>
        <begin position="1"/>
        <end position="1083"/>
    </location>
</feature>
<feature type="domain" description="UIM" evidence="7">
    <location>
        <begin position="97"/>
        <end position="116"/>
    </location>
</feature>
<feature type="domain" description="USP">
    <location>
        <begin position="162"/>
        <end position="656"/>
    </location>
</feature>
<feature type="region of interest" description="Disordered" evidence="6">
    <location>
        <begin position="60"/>
        <end position="82"/>
    </location>
</feature>
<feature type="region of interest" description="Disordered" evidence="6">
    <location>
        <begin position="483"/>
        <end position="539"/>
    </location>
</feature>
<feature type="region of interest" description="Disordered" evidence="6">
    <location>
        <begin position="703"/>
        <end position="728"/>
    </location>
</feature>
<feature type="compositionally biased region" description="Polar residues" evidence="6">
    <location>
        <begin position="487"/>
        <end position="505"/>
    </location>
</feature>
<feature type="compositionally biased region" description="Low complexity" evidence="6">
    <location>
        <begin position="714"/>
        <end position="728"/>
    </location>
</feature>
<feature type="active site" description="Nucleophile" evidence="4 5">
    <location>
        <position position="171"/>
    </location>
</feature>
<feature type="active site" description="Proton acceptor" evidence="4 5">
    <location>
        <position position="606"/>
    </location>
</feature>
<feature type="modified residue" description="Phosphoserine" evidence="3">
    <location>
        <position position="67"/>
    </location>
</feature>
<feature type="modified residue" description="Phosphoserine" evidence="3">
    <location>
        <position position="376"/>
    </location>
</feature>
<feature type="modified residue" description="Phosphoserine" evidence="2">
    <location>
        <position position="556"/>
    </location>
</feature>
<feature type="modified residue" description="Phosphoserine" evidence="3">
    <location>
        <position position="720"/>
    </location>
</feature>
<feature type="modified residue" description="Phosphothreonine" evidence="3">
    <location>
        <position position="1054"/>
    </location>
</feature>
<feature type="cross-link" description="Glycyl lysine isopeptide (Lys-Gly) (interchain with G-Cter in SUMO2)" evidence="3">
    <location>
        <position position="99"/>
    </location>
</feature>
<feature type="splice variant" id="VSP_039547" description="In isoform 2." evidence="7">
    <location>
        <begin position="775"/>
        <end position="806"/>
    </location>
</feature>
<feature type="sequence conflict" description="In Ref. 1; BAF97608." evidence="7" ref="1">
    <original>T</original>
    <variation>S</variation>
    <location>
        <position position="73"/>
    </location>
</feature>
<accession>D3ZJ96</accession>
<accession>D2Y8W6</accession>
<dbReference type="EC" id="3.4.19.12"/>
<dbReference type="EMBL" id="AB240643">
    <property type="protein sequence ID" value="BAF97608.1"/>
    <property type="molecule type" value="mRNA"/>
</dbReference>
<dbReference type="EMBL" id="CH473975">
    <property type="protein sequence ID" value="EDL95433.1"/>
    <property type="molecule type" value="Genomic_DNA"/>
</dbReference>
<dbReference type="RefSeq" id="NP_001101614.1">
    <property type="nucleotide sequence ID" value="NM_001108144.1"/>
</dbReference>
<dbReference type="RefSeq" id="XP_006243070.1">
    <molecule id="D3ZJ96-1"/>
    <property type="nucleotide sequence ID" value="XM_006243008.5"/>
</dbReference>
<dbReference type="RefSeq" id="XP_006243073.1">
    <molecule id="D3ZJ96-2"/>
    <property type="nucleotide sequence ID" value="XM_006243011.5"/>
</dbReference>
<dbReference type="SMR" id="D3ZJ96"/>
<dbReference type="FunCoup" id="D3ZJ96">
    <property type="interactions" value="679"/>
</dbReference>
<dbReference type="STRING" id="10116.ENSRNOP00000009724"/>
<dbReference type="MEROPS" id="C19.054"/>
<dbReference type="PhosphoSitePlus" id="D3ZJ96"/>
<dbReference type="PaxDb" id="10116-ENSRNOP00000060005"/>
<dbReference type="PeptideAtlas" id="D3ZJ96"/>
<dbReference type="Ensembl" id="ENSRNOT00000067420.5">
    <molecule id="D3ZJ96-1"/>
    <property type="protein sequence ID" value="ENSRNOP00000060005.4"/>
    <property type="gene ID" value="ENSRNOG00000007325.9"/>
</dbReference>
<dbReference type="GeneID" id="315639"/>
<dbReference type="KEGG" id="rno:315639"/>
<dbReference type="UCSC" id="RGD:1311555">
    <molecule id="D3ZJ96-1"/>
    <property type="organism name" value="rat"/>
</dbReference>
<dbReference type="AGR" id="RGD:1311555"/>
<dbReference type="CTD" id="57646"/>
<dbReference type="RGD" id="1311555">
    <property type="gene designation" value="Usp28"/>
</dbReference>
<dbReference type="eggNOG" id="KOG1863">
    <property type="taxonomic scope" value="Eukaryota"/>
</dbReference>
<dbReference type="GeneTree" id="ENSGT00940000157670"/>
<dbReference type="HOGENOM" id="CLU_012188_0_0_1"/>
<dbReference type="InParanoid" id="D3ZJ96"/>
<dbReference type="OrthoDB" id="2420415at2759"/>
<dbReference type="PhylomeDB" id="D3ZJ96"/>
<dbReference type="TreeFam" id="TF329035"/>
<dbReference type="Reactome" id="R-RNO-5689880">
    <property type="pathway name" value="Ub-specific processing proteases"/>
</dbReference>
<dbReference type="PRO" id="PR:D3ZJ96"/>
<dbReference type="Proteomes" id="UP000002494">
    <property type="component" value="Chromosome 8"/>
</dbReference>
<dbReference type="Proteomes" id="UP000234681">
    <property type="component" value="Chromosome 8"/>
</dbReference>
<dbReference type="GO" id="GO:0005829">
    <property type="term" value="C:cytosol"/>
    <property type="evidence" value="ECO:0000318"/>
    <property type="project" value="GO_Central"/>
</dbReference>
<dbReference type="GO" id="GO:0005654">
    <property type="term" value="C:nucleoplasm"/>
    <property type="evidence" value="ECO:0000250"/>
    <property type="project" value="UniProtKB"/>
</dbReference>
<dbReference type="GO" id="GO:0005634">
    <property type="term" value="C:nucleus"/>
    <property type="evidence" value="ECO:0000318"/>
    <property type="project" value="GO_Central"/>
</dbReference>
<dbReference type="GO" id="GO:0032991">
    <property type="term" value="C:protein-containing complex"/>
    <property type="evidence" value="ECO:0000266"/>
    <property type="project" value="RGD"/>
</dbReference>
<dbReference type="GO" id="GO:0004843">
    <property type="term" value="F:cysteine-type deubiquitinase activity"/>
    <property type="evidence" value="ECO:0000250"/>
    <property type="project" value="UniProtKB"/>
</dbReference>
<dbReference type="GO" id="GO:0101005">
    <property type="term" value="F:deubiquitinase activity"/>
    <property type="evidence" value="ECO:0000266"/>
    <property type="project" value="RGD"/>
</dbReference>
<dbReference type="GO" id="GO:0008283">
    <property type="term" value="P:cell population proliferation"/>
    <property type="evidence" value="ECO:0000250"/>
    <property type="project" value="UniProtKB"/>
</dbReference>
<dbReference type="GO" id="GO:0034644">
    <property type="term" value="P:cellular response to UV"/>
    <property type="evidence" value="ECO:0000266"/>
    <property type="project" value="RGD"/>
</dbReference>
<dbReference type="GO" id="GO:0000077">
    <property type="term" value="P:DNA damage checkpoint signaling"/>
    <property type="evidence" value="ECO:0000250"/>
    <property type="project" value="UniProtKB"/>
</dbReference>
<dbReference type="GO" id="GO:0006974">
    <property type="term" value="P:DNA damage response"/>
    <property type="evidence" value="ECO:0000266"/>
    <property type="project" value="RGD"/>
</dbReference>
<dbReference type="GO" id="GO:0006281">
    <property type="term" value="P:DNA repair"/>
    <property type="evidence" value="ECO:0007669"/>
    <property type="project" value="UniProtKB-KW"/>
</dbReference>
<dbReference type="GO" id="GO:0042771">
    <property type="term" value="P:intrinsic apoptotic signaling pathway in response to DNA damage by p53 class mediator"/>
    <property type="evidence" value="ECO:0000250"/>
    <property type="project" value="UniProtKB"/>
</dbReference>
<dbReference type="GO" id="GO:0016579">
    <property type="term" value="P:protein deubiquitination"/>
    <property type="evidence" value="ECO:0000250"/>
    <property type="project" value="UniProtKB"/>
</dbReference>
<dbReference type="GO" id="GO:0071947">
    <property type="term" value="P:protein deubiquitination involved in ubiquitin-dependent protein catabolic process"/>
    <property type="evidence" value="ECO:0000266"/>
    <property type="project" value="RGD"/>
</dbReference>
<dbReference type="GO" id="GO:0031647">
    <property type="term" value="P:regulation of protein stability"/>
    <property type="evidence" value="ECO:0000250"/>
    <property type="project" value="UniProtKB"/>
</dbReference>
<dbReference type="GO" id="GO:0010212">
    <property type="term" value="P:response to ionizing radiation"/>
    <property type="evidence" value="ECO:0000250"/>
    <property type="project" value="UniProtKB"/>
</dbReference>
<dbReference type="CDD" id="cd02665">
    <property type="entry name" value="Peptidase_C19I"/>
    <property type="match status" value="1"/>
</dbReference>
<dbReference type="CDD" id="cd14355">
    <property type="entry name" value="UBA_UBP28"/>
    <property type="match status" value="1"/>
</dbReference>
<dbReference type="CDD" id="cd20487">
    <property type="entry name" value="USP28_C"/>
    <property type="match status" value="1"/>
</dbReference>
<dbReference type="FunFam" id="3.90.70.10:FF:000004">
    <property type="entry name" value="Putative ubiquitin carboxyl-terminal hydrolase 25"/>
    <property type="match status" value="1"/>
</dbReference>
<dbReference type="FunFam" id="1.10.8.10:FF:000046">
    <property type="entry name" value="ubiquitin carboxyl-terminal hydrolase 28 isoform X2"/>
    <property type="match status" value="1"/>
</dbReference>
<dbReference type="Gene3D" id="6.10.250.1720">
    <property type="match status" value="1"/>
</dbReference>
<dbReference type="Gene3D" id="3.90.70.10">
    <property type="entry name" value="Cysteine proteinases"/>
    <property type="match status" value="1"/>
</dbReference>
<dbReference type="Gene3D" id="1.10.8.10">
    <property type="entry name" value="DNA helicase RuvA subunit, C-terminal domain"/>
    <property type="match status" value="1"/>
</dbReference>
<dbReference type="InterPro" id="IPR038765">
    <property type="entry name" value="Papain-like_cys_pep_sf"/>
</dbReference>
<dbReference type="InterPro" id="IPR050164">
    <property type="entry name" value="Peptidase_C19"/>
</dbReference>
<dbReference type="InterPro" id="IPR001394">
    <property type="entry name" value="Peptidase_C19_UCH"/>
</dbReference>
<dbReference type="InterPro" id="IPR009060">
    <property type="entry name" value="UBA-like_sf"/>
</dbReference>
<dbReference type="InterPro" id="IPR054109">
    <property type="entry name" value="UBA_8"/>
</dbReference>
<dbReference type="InterPro" id="IPR054108">
    <property type="entry name" value="USP25/28_UIM"/>
</dbReference>
<dbReference type="InterPro" id="IPR018200">
    <property type="entry name" value="USP_CS"/>
</dbReference>
<dbReference type="InterPro" id="IPR028889">
    <property type="entry name" value="USP_dom"/>
</dbReference>
<dbReference type="PANTHER" id="PTHR24006">
    <property type="entry name" value="UBIQUITIN CARBOXYL-TERMINAL HYDROLASE"/>
    <property type="match status" value="1"/>
</dbReference>
<dbReference type="PANTHER" id="PTHR24006:SF678">
    <property type="entry name" value="UBIQUITIN CARBOXYL-TERMINAL HYDROLASE 28"/>
    <property type="match status" value="1"/>
</dbReference>
<dbReference type="Pfam" id="PF22566">
    <property type="entry name" value="UBA_8"/>
    <property type="match status" value="1"/>
</dbReference>
<dbReference type="Pfam" id="PF00443">
    <property type="entry name" value="UCH"/>
    <property type="match status" value="1"/>
</dbReference>
<dbReference type="Pfam" id="PF21909">
    <property type="entry name" value="USP_UIM_N"/>
    <property type="match status" value="1"/>
</dbReference>
<dbReference type="SUPFAM" id="SSF54001">
    <property type="entry name" value="Cysteine proteinases"/>
    <property type="match status" value="1"/>
</dbReference>
<dbReference type="SUPFAM" id="SSF46934">
    <property type="entry name" value="UBA-like"/>
    <property type="match status" value="1"/>
</dbReference>
<dbReference type="PROSITE" id="PS00972">
    <property type="entry name" value="USP_1"/>
    <property type="match status" value="1"/>
</dbReference>
<dbReference type="PROSITE" id="PS00973">
    <property type="entry name" value="USP_2"/>
    <property type="match status" value="1"/>
</dbReference>
<dbReference type="PROSITE" id="PS50235">
    <property type="entry name" value="USP_3"/>
    <property type="match status" value="1"/>
</dbReference>
<name>UBP28_RAT</name>
<reference key="1">
    <citation type="submission" date="2005-11" db="EMBL/GenBank/DDBJ databases">
        <title>Expression of deubiquitination enzyme (USP28) in rat spermatogenic cell. Immunocytochemical analysis.</title>
        <authorList>
            <person name="Haraguchi C.M."/>
            <person name="Mabuchi T."/>
            <person name="Yokota S."/>
        </authorList>
    </citation>
    <scope>NUCLEOTIDE SEQUENCE [MRNA]</scope>
    <source>
        <tissue>Testis</tissue>
    </source>
</reference>
<reference key="2">
    <citation type="submission" date="2005-07" db="EMBL/GenBank/DDBJ databases">
        <authorList>
            <person name="Mural R.J."/>
            <person name="Adams M.D."/>
            <person name="Myers E.W."/>
            <person name="Smith H.O."/>
            <person name="Venter J.C."/>
        </authorList>
    </citation>
    <scope>NUCLEOTIDE SEQUENCE [LARGE SCALE GENOMIC DNA]</scope>
    <source>
        <strain>Brown Norway</strain>
    </source>
</reference>
<sequence length="1083" mass="122688">MTAELQQDDAAGAADGHGSSCQMLLNQLREITGIQDPSFLHEALKASNGDITQAVSLLTDQRVKEPSHDTAATEPSEVEESATSKDLLAKVIDLTHDNKDDLQAAIALSLLESPNIQTDSRDLNRIHEANSAETKRSKRKRCEVWGENHNPNNWRRVDGWPVGLKNVGNTCWFSAVIQSLFQLPEFRRLVLSYSLPQNILENCRSHTEKRNIMFMQELQYLFALLLGSNRKFVDPSAALDLLKGAFRSSEEQQQDVSEFTHKLLDWLEDAFQLAVNVNSNPRTKSENPMVQLFYGTFLTEGVREGKPFCNNETFGQYPLQVNGYHNLDECLEGAMVEGDIALLPSDRSVKYGQERWFTKLPPVLTFELSRFEFNQSLGQPEKIHNKLEFPQVIYMDRYMYKSKELIRSKRESIRKLKEEIQVLQQKLERYVKYGSGPSRFPLPDMLKYVIEFASTKPASESCLSGSVEHMTLPLPSVHCPISDLTAKESSSPKSCSQNAEGSFSSPEDALPNSEVMNGPFTSPHSSLEMPAPPPAPRTVTDEEMNFVKTCLQRWRSEIEQDIQDLKNCISSTTQAIEQMYCDPLLRQVPYRLHAVLVHEGQASAGHYWAYIYNQPRQIWLKYNDISVTESSWEELERDSYGGLRNVSAYCLMYINDKLPHCSAEAAHGESDQTAEVEALSVELRQYIQEDNWRFEQEVEEWEEEQSCKIPQMESSPNSSSQDFSTSQESSAASSHGVRCLSSEHAVIAKEQTAQAIANTAHAYEKSGVEAALSEVMLSPAMQGVLLAIAKARQTFDRDGSEAGLIKAFHEEYSRLYQLAKETPTSHSDPRLQHVLVYFFQNEAPKRVVERTLLEQFADRNLSYDERSISIMKVAQAKLMEIGPEDMNMEEYKRWHEDYSLFRKVSVYLLTGLELFQKGKYQEALSYLVYAYQSNAGLLVKGPRRGVKESVIALYRRKCLLELNAKAASLFETNDDHSVTEGINVMNELIIPCIHLIINNDISKDDLDAIEVMRNHWCSYLGKDIAENLQLCLGEFLPRLLDPSAEIIVLKEPPTIRPNSPYDLCSRFAAVMESIQGVSTVTVK</sequence>
<evidence type="ECO:0000250" key="1"/>
<evidence type="ECO:0000250" key="2">
    <source>
        <dbReference type="UniProtKB" id="Q5I043"/>
    </source>
</evidence>
<evidence type="ECO:0000250" key="3">
    <source>
        <dbReference type="UniProtKB" id="Q96RU2"/>
    </source>
</evidence>
<evidence type="ECO:0000255" key="4">
    <source>
        <dbReference type="PROSITE-ProRule" id="PRU10092"/>
    </source>
</evidence>
<evidence type="ECO:0000255" key="5">
    <source>
        <dbReference type="PROSITE-ProRule" id="PRU10093"/>
    </source>
</evidence>
<evidence type="ECO:0000256" key="6">
    <source>
        <dbReference type="SAM" id="MobiDB-lite"/>
    </source>
</evidence>
<evidence type="ECO:0000305" key="7"/>
<keyword id="KW-0025">Alternative splicing</keyword>
<keyword id="KW-0227">DNA damage</keyword>
<keyword id="KW-0234">DNA repair</keyword>
<keyword id="KW-0378">Hydrolase</keyword>
<keyword id="KW-1017">Isopeptide bond</keyword>
<keyword id="KW-0539">Nucleus</keyword>
<keyword id="KW-0597">Phosphoprotein</keyword>
<keyword id="KW-0645">Protease</keyword>
<keyword id="KW-1185">Reference proteome</keyword>
<keyword id="KW-0788">Thiol protease</keyword>
<keyword id="KW-0832">Ubl conjugation</keyword>
<keyword id="KW-0833">Ubl conjugation pathway</keyword>
<comment type="function">
    <text evidence="3">Deubiquitinase involved in DNA damage response checkpoint and MYC proto-oncogene stability. Involved in DNA damage induced apoptosis by specifically deubiquitinating proteins of the DNA damage pathway such as CLSPN. Also involved in G2 DNA damage checkpoint, by deubiquitinating CLSPN, and preventing its degradation by the anaphase promoting complex/cyclosome (APC/C). In contrast, it does not deubiquitinate PLK1. Specifically deubiquitinates MYC in the nucleoplasm, leading to prevent MYC degradation by the proteasome: acts by specifically interacting with FBXW7 (FBW7alpha) in the nucleoplasm and counteracting ubiquitination of MYC by the SCF(FBXW7) complex. Deubiquitinates ZNF304, hence preventing ZNF304 degradation by the proteasome and leading to the activated KRAS-mediated promoter hypermethylation and transcriptional silencing of tumor suppressor genes (TSGs) in a subset of colorectal cancers (CRC) cells.</text>
</comment>
<comment type="catalytic activity">
    <reaction>
        <text>Thiol-dependent hydrolysis of ester, thioester, amide, peptide and isopeptide bonds formed by the C-terminal Gly of ubiquitin (a 76-residue protein attached to proteins as an intracellular targeting signal).</text>
        <dbReference type="EC" id="3.4.19.12"/>
    </reaction>
</comment>
<comment type="subunit">
    <text evidence="3">Interacts with ZNF304. Interacts with PRKD1. Interacts with TP53BP1. Interacts with FBXW7; following DNA damage, dissociates from FBXW7 leading to degradation of MYC.</text>
</comment>
<comment type="subcellular location">
    <subcellularLocation>
        <location evidence="1">Nucleus</location>
        <location evidence="1">Nucleoplasm</location>
    </subcellularLocation>
</comment>
<comment type="alternative products">
    <event type="alternative splicing"/>
    <isoform>
        <id>D3ZJ96-1</id>
        <name>1</name>
        <sequence type="displayed"/>
    </isoform>
    <isoform>
        <id>D3ZJ96-2</id>
        <name>2</name>
        <sequence type="described" ref="VSP_039547"/>
    </isoform>
</comment>
<comment type="PTM">
    <text evidence="1">Degraded upon nickel ion level or hypoxia exposure.</text>
</comment>
<comment type="PTM">
    <text evidence="3">Phosphorylated upon DNA damage at Ser-67 and Ser-720, by ATM or ATR. Phosphorylated by PRKD1.</text>
</comment>
<comment type="similarity">
    <text evidence="7">Belongs to the peptidase C19 family. USP28 subfamily.</text>
</comment>
<organism>
    <name type="scientific">Rattus norvegicus</name>
    <name type="common">Rat</name>
    <dbReference type="NCBI Taxonomy" id="10116"/>
    <lineage>
        <taxon>Eukaryota</taxon>
        <taxon>Metazoa</taxon>
        <taxon>Chordata</taxon>
        <taxon>Craniata</taxon>
        <taxon>Vertebrata</taxon>
        <taxon>Euteleostomi</taxon>
        <taxon>Mammalia</taxon>
        <taxon>Eutheria</taxon>
        <taxon>Euarchontoglires</taxon>
        <taxon>Glires</taxon>
        <taxon>Rodentia</taxon>
        <taxon>Myomorpha</taxon>
        <taxon>Muroidea</taxon>
        <taxon>Muridae</taxon>
        <taxon>Murinae</taxon>
        <taxon>Rattus</taxon>
    </lineage>
</organism>
<proteinExistence type="evidence at transcript level"/>